<gene>
    <name type="primary">bap</name>
    <name type="synonym">bgp</name>
    <name type="synonym">NK3</name>
    <name type="ORF">CG7902</name>
</gene>
<accession>P22809</accession>
<accession>Q24254</accession>
<accession>Q6UJA4</accession>
<accession>Q6UJA5</accession>
<accession>Q6UJA8</accession>
<accession>Q6UJA9</accession>
<accession>Q6UJB1</accession>
<accession>Q6UJB2</accession>
<accession>Q9VDA6</accession>
<name>BAGP_DROME</name>
<reference key="1">
    <citation type="journal article" date="1993" name="Genes Dev.">
        <title>Tinman and bagpipe: two homeo box genes that determine cell fates in the dorsal mesoderm of Drosophila.</title>
        <authorList>
            <person name="Azpiazu N."/>
            <person name="Frasch M."/>
        </authorList>
    </citation>
    <scope>NUCLEOTIDE SEQUENCE [MRNA]</scope>
    <scope>FUNCTION</scope>
    <scope>TISSUE SPECIFICITY</scope>
    <source>
        <tissue>Embryo</tissue>
    </source>
</reference>
<reference key="2">
    <citation type="journal article" date="2004" name="Genetics">
        <title>Nucleotide variation in the tinman and bagpipe homeobox genes of Drosophila melanogaster.</title>
        <authorList>
            <person name="Balakirev E.S."/>
            <person name="Ayala F.J."/>
        </authorList>
    </citation>
    <scope>NUCLEOTIDE SEQUENCE [GENOMIC DNA]</scope>
    <source>
        <strain>F-1461S</strain>
        <strain>F-274F</strain>
        <strain>F-357F</strain>
        <strain>F-517F</strain>
        <strain>F-517S</strain>
        <strain>F-531F</strain>
        <strain>F-611F</strain>
        <strain>F-775F</strain>
        <strain>F-96S</strain>
        <strain>S-114S</strain>
        <strain>S-1224F</strain>
        <strain>S-174F</strain>
        <strain>S-255S</strain>
        <strain>S-2588S</strain>
        <strain>S-26F</strain>
        <strain>S-377F</strain>
        <strain>S-438S</strain>
        <strain>S-501F</strain>
        <strain>S-501S</strain>
        <strain>S-510S</strain>
        <strain>S-521F</strain>
        <strain>S-521S</strain>
        <strain>S-549S</strain>
        <strain>S-565F</strain>
        <strain>S-581F</strain>
        <strain>S-94F</strain>
        <strain>S-968F</strain>
        <strain>US-255F</strain>
    </source>
</reference>
<reference key="3">
    <citation type="journal article" date="2000" name="Science">
        <title>The genome sequence of Drosophila melanogaster.</title>
        <authorList>
            <person name="Adams M.D."/>
            <person name="Celniker S.E."/>
            <person name="Holt R.A."/>
            <person name="Evans C.A."/>
            <person name="Gocayne J.D."/>
            <person name="Amanatides P.G."/>
            <person name="Scherer S.E."/>
            <person name="Li P.W."/>
            <person name="Hoskins R.A."/>
            <person name="Galle R.F."/>
            <person name="George R.A."/>
            <person name="Lewis S.E."/>
            <person name="Richards S."/>
            <person name="Ashburner M."/>
            <person name="Henderson S.N."/>
            <person name="Sutton G.G."/>
            <person name="Wortman J.R."/>
            <person name="Yandell M.D."/>
            <person name="Zhang Q."/>
            <person name="Chen L.X."/>
            <person name="Brandon R.C."/>
            <person name="Rogers Y.-H.C."/>
            <person name="Blazej R.G."/>
            <person name="Champe M."/>
            <person name="Pfeiffer B.D."/>
            <person name="Wan K.H."/>
            <person name="Doyle C."/>
            <person name="Baxter E.G."/>
            <person name="Helt G."/>
            <person name="Nelson C.R."/>
            <person name="Miklos G.L.G."/>
            <person name="Abril J.F."/>
            <person name="Agbayani A."/>
            <person name="An H.-J."/>
            <person name="Andrews-Pfannkoch C."/>
            <person name="Baldwin D."/>
            <person name="Ballew R.M."/>
            <person name="Basu A."/>
            <person name="Baxendale J."/>
            <person name="Bayraktaroglu L."/>
            <person name="Beasley E.M."/>
            <person name="Beeson K.Y."/>
            <person name="Benos P.V."/>
            <person name="Berman B.P."/>
            <person name="Bhandari D."/>
            <person name="Bolshakov S."/>
            <person name="Borkova D."/>
            <person name="Botchan M.R."/>
            <person name="Bouck J."/>
            <person name="Brokstein P."/>
            <person name="Brottier P."/>
            <person name="Burtis K.C."/>
            <person name="Busam D.A."/>
            <person name="Butler H."/>
            <person name="Cadieu E."/>
            <person name="Center A."/>
            <person name="Chandra I."/>
            <person name="Cherry J.M."/>
            <person name="Cawley S."/>
            <person name="Dahlke C."/>
            <person name="Davenport L.B."/>
            <person name="Davies P."/>
            <person name="de Pablos B."/>
            <person name="Delcher A."/>
            <person name="Deng Z."/>
            <person name="Mays A.D."/>
            <person name="Dew I."/>
            <person name="Dietz S.M."/>
            <person name="Dodson K."/>
            <person name="Doup L.E."/>
            <person name="Downes M."/>
            <person name="Dugan-Rocha S."/>
            <person name="Dunkov B.C."/>
            <person name="Dunn P."/>
            <person name="Durbin K.J."/>
            <person name="Evangelista C.C."/>
            <person name="Ferraz C."/>
            <person name="Ferriera S."/>
            <person name="Fleischmann W."/>
            <person name="Fosler C."/>
            <person name="Gabrielian A.E."/>
            <person name="Garg N.S."/>
            <person name="Gelbart W.M."/>
            <person name="Glasser K."/>
            <person name="Glodek A."/>
            <person name="Gong F."/>
            <person name="Gorrell J.H."/>
            <person name="Gu Z."/>
            <person name="Guan P."/>
            <person name="Harris M."/>
            <person name="Harris N.L."/>
            <person name="Harvey D.A."/>
            <person name="Heiman T.J."/>
            <person name="Hernandez J.R."/>
            <person name="Houck J."/>
            <person name="Hostin D."/>
            <person name="Houston K.A."/>
            <person name="Howland T.J."/>
            <person name="Wei M.-H."/>
            <person name="Ibegwam C."/>
            <person name="Jalali M."/>
            <person name="Kalush F."/>
            <person name="Karpen G.H."/>
            <person name="Ke Z."/>
            <person name="Kennison J.A."/>
            <person name="Ketchum K.A."/>
            <person name="Kimmel B.E."/>
            <person name="Kodira C.D."/>
            <person name="Kraft C.L."/>
            <person name="Kravitz S."/>
            <person name="Kulp D."/>
            <person name="Lai Z."/>
            <person name="Lasko P."/>
            <person name="Lei Y."/>
            <person name="Levitsky A.A."/>
            <person name="Li J.H."/>
            <person name="Li Z."/>
            <person name="Liang Y."/>
            <person name="Lin X."/>
            <person name="Liu X."/>
            <person name="Mattei B."/>
            <person name="McIntosh T.C."/>
            <person name="McLeod M.P."/>
            <person name="McPherson D."/>
            <person name="Merkulov G."/>
            <person name="Milshina N.V."/>
            <person name="Mobarry C."/>
            <person name="Morris J."/>
            <person name="Moshrefi A."/>
            <person name="Mount S.M."/>
            <person name="Moy M."/>
            <person name="Murphy B."/>
            <person name="Murphy L."/>
            <person name="Muzny D.M."/>
            <person name="Nelson D.L."/>
            <person name="Nelson D.R."/>
            <person name="Nelson K.A."/>
            <person name="Nixon K."/>
            <person name="Nusskern D.R."/>
            <person name="Pacleb J.M."/>
            <person name="Palazzolo M."/>
            <person name="Pittman G.S."/>
            <person name="Pan S."/>
            <person name="Pollard J."/>
            <person name="Puri V."/>
            <person name="Reese M.G."/>
            <person name="Reinert K."/>
            <person name="Remington K."/>
            <person name="Saunders R.D.C."/>
            <person name="Scheeler F."/>
            <person name="Shen H."/>
            <person name="Shue B.C."/>
            <person name="Siden-Kiamos I."/>
            <person name="Simpson M."/>
            <person name="Skupski M.P."/>
            <person name="Smith T.J."/>
            <person name="Spier E."/>
            <person name="Spradling A.C."/>
            <person name="Stapleton M."/>
            <person name="Strong R."/>
            <person name="Sun E."/>
            <person name="Svirskas R."/>
            <person name="Tector C."/>
            <person name="Turner R."/>
            <person name="Venter E."/>
            <person name="Wang A.H."/>
            <person name="Wang X."/>
            <person name="Wang Z.-Y."/>
            <person name="Wassarman D.A."/>
            <person name="Weinstock G.M."/>
            <person name="Weissenbach J."/>
            <person name="Williams S.M."/>
            <person name="Woodage T."/>
            <person name="Worley K.C."/>
            <person name="Wu D."/>
            <person name="Yang S."/>
            <person name="Yao Q.A."/>
            <person name="Ye J."/>
            <person name="Yeh R.-F."/>
            <person name="Zaveri J.S."/>
            <person name="Zhan M."/>
            <person name="Zhang G."/>
            <person name="Zhao Q."/>
            <person name="Zheng L."/>
            <person name="Zheng X.H."/>
            <person name="Zhong F.N."/>
            <person name="Zhong W."/>
            <person name="Zhou X."/>
            <person name="Zhu S.C."/>
            <person name="Zhu X."/>
            <person name="Smith H.O."/>
            <person name="Gibbs R.A."/>
            <person name="Myers E.W."/>
            <person name="Rubin G.M."/>
            <person name="Venter J.C."/>
        </authorList>
    </citation>
    <scope>NUCLEOTIDE SEQUENCE [LARGE SCALE GENOMIC DNA]</scope>
    <source>
        <strain>Berkeley</strain>
    </source>
</reference>
<reference key="4">
    <citation type="journal article" date="2002" name="Genome Biol.">
        <title>Annotation of the Drosophila melanogaster euchromatic genome: a systematic review.</title>
        <authorList>
            <person name="Misra S."/>
            <person name="Crosby M.A."/>
            <person name="Mungall C.J."/>
            <person name="Matthews B.B."/>
            <person name="Campbell K.S."/>
            <person name="Hradecky P."/>
            <person name="Huang Y."/>
            <person name="Kaminker J.S."/>
            <person name="Millburn G.H."/>
            <person name="Prochnik S.E."/>
            <person name="Smith C.D."/>
            <person name="Tupy J.L."/>
            <person name="Whitfield E.J."/>
            <person name="Bayraktaroglu L."/>
            <person name="Berman B.P."/>
            <person name="Bettencourt B.R."/>
            <person name="Celniker S.E."/>
            <person name="de Grey A.D.N.J."/>
            <person name="Drysdale R.A."/>
            <person name="Harris N.L."/>
            <person name="Richter J."/>
            <person name="Russo S."/>
            <person name="Schroeder A.J."/>
            <person name="Shu S.Q."/>
            <person name="Stapleton M."/>
            <person name="Yamada C."/>
            <person name="Ashburner M."/>
            <person name="Gelbart W.M."/>
            <person name="Rubin G.M."/>
            <person name="Lewis S.E."/>
        </authorList>
    </citation>
    <scope>GENOME REANNOTATION</scope>
    <source>
        <strain>Berkeley</strain>
    </source>
</reference>
<reference key="5">
    <citation type="journal article" date="1989" name="Proc. Natl. Acad. Sci. U.S.A.">
        <title>Drosophila NK-homeobox genes.</title>
        <authorList>
            <person name="Kim Y."/>
            <person name="Nirenberg M."/>
        </authorList>
    </citation>
    <scope>NUCLEOTIDE SEQUENCE [GENOMIC DNA] OF 95-288</scope>
    <source>
        <strain>Canton-S</strain>
    </source>
</reference>
<sequence>MLNMESAGVSAAMAGLSKSLTTPFSINDILTRSNPETRRMSSVDSEPEPEKLKPSSDRERSISKSPPLCCRDLGLYKLTQPKEIQPSARQPSNYLQYYAAAMDNNNHHHQATGTSNSSAADYMQRKLAYFGSTLAAPLDMRRCTSNDSDCDSPPPLSSSPSESPLSHDGSGLSRKKRSRAAFSHAQVFELERRFAQQRYLSGPERSEMAKSLRLTETQVKIWFQNRRYKTKRKQIQQHEAALLGASKRVPVQVLVREDGSTTYAHMAAPGAGHGLDPALINIYRHQLQLAYGGLPLPQMQMPFPYFYPQHKVPQPIPPPTQSSSFVTASSASSSPVPIPIPGAVRPQRTPCPSPNGQMMSVESGAESVHSAAEDVDENVEID</sequence>
<organism>
    <name type="scientific">Drosophila melanogaster</name>
    <name type="common">Fruit fly</name>
    <dbReference type="NCBI Taxonomy" id="7227"/>
    <lineage>
        <taxon>Eukaryota</taxon>
        <taxon>Metazoa</taxon>
        <taxon>Ecdysozoa</taxon>
        <taxon>Arthropoda</taxon>
        <taxon>Hexapoda</taxon>
        <taxon>Insecta</taxon>
        <taxon>Pterygota</taxon>
        <taxon>Neoptera</taxon>
        <taxon>Endopterygota</taxon>
        <taxon>Diptera</taxon>
        <taxon>Brachycera</taxon>
        <taxon>Muscomorpha</taxon>
        <taxon>Ephydroidea</taxon>
        <taxon>Drosophilidae</taxon>
        <taxon>Drosophila</taxon>
        <taxon>Sophophora</taxon>
    </lineage>
</organism>
<keyword id="KW-0217">Developmental protein</keyword>
<keyword id="KW-0238">DNA-binding</keyword>
<keyword id="KW-0371">Homeobox</keyword>
<keyword id="KW-0539">Nucleus</keyword>
<keyword id="KW-1185">Reference proteome</keyword>
<protein>
    <recommendedName>
        <fullName>Homeobox protein bagpipe</fullName>
    </recommendedName>
    <alternativeName>
        <fullName>Homeobox protein NK-3</fullName>
    </alternativeName>
</protein>
<evidence type="ECO:0000255" key="1">
    <source>
        <dbReference type="PROSITE-ProRule" id="PRU00108"/>
    </source>
</evidence>
<evidence type="ECO:0000256" key="2">
    <source>
        <dbReference type="SAM" id="MobiDB-lite"/>
    </source>
</evidence>
<evidence type="ECO:0000269" key="3">
    <source>
    </source>
</evidence>
<evidence type="ECO:0000305" key="4"/>
<proteinExistence type="evidence at transcript level"/>
<dbReference type="EMBL" id="L17133">
    <property type="protein sequence ID" value="AAC37165.1"/>
    <property type="molecule type" value="mRNA"/>
</dbReference>
<dbReference type="EMBL" id="AY369088">
    <property type="protein sequence ID" value="AAQ73793.1"/>
    <property type="molecule type" value="Genomic_DNA"/>
</dbReference>
<dbReference type="EMBL" id="AY369089">
    <property type="protein sequence ID" value="AAQ73794.1"/>
    <property type="molecule type" value="Genomic_DNA"/>
</dbReference>
<dbReference type="EMBL" id="AY369090">
    <property type="protein sequence ID" value="AAQ73795.1"/>
    <property type="molecule type" value="Genomic_DNA"/>
</dbReference>
<dbReference type="EMBL" id="AY369091">
    <property type="protein sequence ID" value="AAQ73796.1"/>
    <property type="molecule type" value="Genomic_DNA"/>
</dbReference>
<dbReference type="EMBL" id="AY369092">
    <property type="protein sequence ID" value="AAQ73797.1"/>
    <property type="molecule type" value="Genomic_DNA"/>
</dbReference>
<dbReference type="EMBL" id="AY369093">
    <property type="protein sequence ID" value="AAQ73798.1"/>
    <property type="molecule type" value="Genomic_DNA"/>
</dbReference>
<dbReference type="EMBL" id="AY369094">
    <property type="protein sequence ID" value="AAQ73799.1"/>
    <property type="molecule type" value="Genomic_DNA"/>
</dbReference>
<dbReference type="EMBL" id="AY369095">
    <property type="protein sequence ID" value="AAQ73800.1"/>
    <property type="molecule type" value="Genomic_DNA"/>
</dbReference>
<dbReference type="EMBL" id="AY369096">
    <property type="protein sequence ID" value="AAQ73801.1"/>
    <property type="molecule type" value="Genomic_DNA"/>
</dbReference>
<dbReference type="EMBL" id="AY369097">
    <property type="protein sequence ID" value="AAQ73802.1"/>
    <property type="molecule type" value="Genomic_DNA"/>
</dbReference>
<dbReference type="EMBL" id="AY369098">
    <property type="protein sequence ID" value="AAQ73803.1"/>
    <property type="molecule type" value="Genomic_DNA"/>
</dbReference>
<dbReference type="EMBL" id="AY369099">
    <property type="protein sequence ID" value="AAQ73804.1"/>
    <property type="molecule type" value="Genomic_DNA"/>
</dbReference>
<dbReference type="EMBL" id="AY369100">
    <property type="protein sequence ID" value="AAQ73805.1"/>
    <property type="molecule type" value="Genomic_DNA"/>
</dbReference>
<dbReference type="EMBL" id="AY369101">
    <property type="protein sequence ID" value="AAQ73806.1"/>
    <property type="molecule type" value="Genomic_DNA"/>
</dbReference>
<dbReference type="EMBL" id="AY369102">
    <property type="protein sequence ID" value="AAQ73807.1"/>
    <property type="molecule type" value="Genomic_DNA"/>
</dbReference>
<dbReference type="EMBL" id="AY369103">
    <property type="protein sequence ID" value="AAQ73808.1"/>
    <property type="molecule type" value="Genomic_DNA"/>
</dbReference>
<dbReference type="EMBL" id="AY369104">
    <property type="protein sequence ID" value="AAQ73809.1"/>
    <property type="molecule type" value="Genomic_DNA"/>
</dbReference>
<dbReference type="EMBL" id="AY369105">
    <property type="protein sequence ID" value="AAQ73810.1"/>
    <property type="molecule type" value="Genomic_DNA"/>
</dbReference>
<dbReference type="EMBL" id="AY369106">
    <property type="protein sequence ID" value="AAQ73811.1"/>
    <property type="molecule type" value="Genomic_DNA"/>
</dbReference>
<dbReference type="EMBL" id="AY369107">
    <property type="protein sequence ID" value="AAQ73812.1"/>
    <property type="molecule type" value="Genomic_DNA"/>
</dbReference>
<dbReference type="EMBL" id="AY369108">
    <property type="protein sequence ID" value="AAQ73813.1"/>
    <property type="molecule type" value="Genomic_DNA"/>
</dbReference>
<dbReference type="EMBL" id="AY369109">
    <property type="protein sequence ID" value="AAQ73814.1"/>
    <property type="molecule type" value="Genomic_DNA"/>
</dbReference>
<dbReference type="EMBL" id="AY369110">
    <property type="protein sequence ID" value="AAQ73815.1"/>
    <property type="molecule type" value="Genomic_DNA"/>
</dbReference>
<dbReference type="EMBL" id="AY369111">
    <property type="protein sequence ID" value="AAQ73816.1"/>
    <property type="molecule type" value="Genomic_DNA"/>
</dbReference>
<dbReference type="EMBL" id="AY369112">
    <property type="protein sequence ID" value="AAQ73817.1"/>
    <property type="molecule type" value="Genomic_DNA"/>
</dbReference>
<dbReference type="EMBL" id="AY369113">
    <property type="protein sequence ID" value="AAQ73818.1"/>
    <property type="molecule type" value="Genomic_DNA"/>
</dbReference>
<dbReference type="EMBL" id="AY369114">
    <property type="protein sequence ID" value="AAQ73819.1"/>
    <property type="molecule type" value="Genomic_DNA"/>
</dbReference>
<dbReference type="EMBL" id="AY369115">
    <property type="protein sequence ID" value="AAQ73820.1"/>
    <property type="molecule type" value="Genomic_DNA"/>
</dbReference>
<dbReference type="EMBL" id="AE014297">
    <property type="protein sequence ID" value="AAF55891.1"/>
    <property type="molecule type" value="Genomic_DNA"/>
</dbReference>
<dbReference type="EMBL" id="M27291">
    <property type="protein sequence ID" value="AAA28618.1"/>
    <property type="molecule type" value="Genomic_DNA"/>
</dbReference>
<dbReference type="PIR" id="C33976">
    <property type="entry name" value="C33976"/>
</dbReference>
<dbReference type="RefSeq" id="NP_732637.1">
    <property type="nucleotide sequence ID" value="NM_169958.2"/>
</dbReference>
<dbReference type="SMR" id="P22809"/>
<dbReference type="BioGRID" id="67503">
    <property type="interactions" value="17"/>
</dbReference>
<dbReference type="FunCoup" id="P22809">
    <property type="interactions" value="10"/>
</dbReference>
<dbReference type="IntAct" id="P22809">
    <property type="interactions" value="11"/>
</dbReference>
<dbReference type="STRING" id="7227.FBpp0083486"/>
<dbReference type="PaxDb" id="7227-FBpp0083486"/>
<dbReference type="EnsemblMetazoa" id="FBtr0084087">
    <property type="protein sequence ID" value="FBpp0083486"/>
    <property type="gene ID" value="FBgn0004862"/>
</dbReference>
<dbReference type="GeneID" id="42537"/>
<dbReference type="KEGG" id="dme:Dmel_CG7902"/>
<dbReference type="UCSC" id="CG7902-RA">
    <property type="organism name" value="d. melanogaster"/>
</dbReference>
<dbReference type="AGR" id="FB:FBgn0004862"/>
<dbReference type="CTD" id="42537"/>
<dbReference type="FlyBase" id="FBgn0004862">
    <property type="gene designation" value="bap"/>
</dbReference>
<dbReference type="VEuPathDB" id="VectorBase:FBgn0004862"/>
<dbReference type="eggNOG" id="KOG0842">
    <property type="taxonomic scope" value="Eukaryota"/>
</dbReference>
<dbReference type="HOGENOM" id="CLU_044250_0_0_1"/>
<dbReference type="InParanoid" id="P22809"/>
<dbReference type="OMA" id="YAHMAAP"/>
<dbReference type="OrthoDB" id="6159439at2759"/>
<dbReference type="PhylomeDB" id="P22809"/>
<dbReference type="SignaLink" id="P22809"/>
<dbReference type="BioGRID-ORCS" id="42537">
    <property type="hits" value="0 hits in 3 CRISPR screens"/>
</dbReference>
<dbReference type="GenomeRNAi" id="42537"/>
<dbReference type="PRO" id="PR:P22809"/>
<dbReference type="Proteomes" id="UP000000803">
    <property type="component" value="Chromosome 3R"/>
</dbReference>
<dbReference type="Bgee" id="FBgn0004862">
    <property type="expression patterns" value="Expressed in visceral muscle cell in digestive tract and 18 other cell types or tissues"/>
</dbReference>
<dbReference type="ExpressionAtlas" id="P22809">
    <property type="expression patterns" value="baseline and differential"/>
</dbReference>
<dbReference type="GO" id="GO:0005634">
    <property type="term" value="C:nucleus"/>
    <property type="evidence" value="ECO:0000314"/>
    <property type="project" value="FlyBase"/>
</dbReference>
<dbReference type="GO" id="GO:0003677">
    <property type="term" value="F:DNA binding"/>
    <property type="evidence" value="ECO:0000314"/>
    <property type="project" value="UniProtKB"/>
</dbReference>
<dbReference type="GO" id="GO:0000981">
    <property type="term" value="F:DNA-binding transcription factor activity, RNA polymerase II-specific"/>
    <property type="evidence" value="ECO:0000316"/>
    <property type="project" value="FlyBase"/>
</dbReference>
<dbReference type="GO" id="GO:0000978">
    <property type="term" value="F:RNA polymerase II cis-regulatory region sequence-specific DNA binding"/>
    <property type="evidence" value="ECO:0000318"/>
    <property type="project" value="GO_Central"/>
</dbReference>
<dbReference type="GO" id="GO:0043565">
    <property type="term" value="F:sequence-specific DNA binding"/>
    <property type="evidence" value="ECO:0000314"/>
    <property type="project" value="FlyBase"/>
</dbReference>
<dbReference type="GO" id="GO:0030154">
    <property type="term" value="P:cell differentiation"/>
    <property type="evidence" value="ECO:0000318"/>
    <property type="project" value="GO_Central"/>
</dbReference>
<dbReference type="GO" id="GO:0007498">
    <property type="term" value="P:mesoderm development"/>
    <property type="evidence" value="ECO:0000270"/>
    <property type="project" value="FlyBase"/>
</dbReference>
<dbReference type="GO" id="GO:0001710">
    <property type="term" value="P:mesodermal cell fate commitment"/>
    <property type="evidence" value="ECO:0000304"/>
    <property type="project" value="FlyBase"/>
</dbReference>
<dbReference type="GO" id="GO:0045944">
    <property type="term" value="P:positive regulation of transcription by RNA polymerase II"/>
    <property type="evidence" value="ECO:0000315"/>
    <property type="project" value="UniProtKB"/>
</dbReference>
<dbReference type="GO" id="GO:0006357">
    <property type="term" value="P:regulation of transcription by RNA polymerase II"/>
    <property type="evidence" value="ECO:0000315"/>
    <property type="project" value="FlyBase"/>
</dbReference>
<dbReference type="GO" id="GO:0007522">
    <property type="term" value="P:visceral muscle development"/>
    <property type="evidence" value="ECO:0000303"/>
    <property type="project" value="FlyBase"/>
</dbReference>
<dbReference type="CDD" id="cd00086">
    <property type="entry name" value="homeodomain"/>
    <property type="match status" value="1"/>
</dbReference>
<dbReference type="FunFam" id="1.10.10.60:FF:000616">
    <property type="entry name" value="BAP"/>
    <property type="match status" value="1"/>
</dbReference>
<dbReference type="Gene3D" id="1.10.10.60">
    <property type="entry name" value="Homeodomain-like"/>
    <property type="match status" value="1"/>
</dbReference>
<dbReference type="InterPro" id="IPR001356">
    <property type="entry name" value="HD"/>
</dbReference>
<dbReference type="InterPro" id="IPR020479">
    <property type="entry name" value="HD_metazoa"/>
</dbReference>
<dbReference type="InterPro" id="IPR017970">
    <property type="entry name" value="Homeobox_CS"/>
</dbReference>
<dbReference type="InterPro" id="IPR050394">
    <property type="entry name" value="Homeobox_NK-like"/>
</dbReference>
<dbReference type="InterPro" id="IPR009057">
    <property type="entry name" value="Homeodomain-like_sf"/>
</dbReference>
<dbReference type="PANTHER" id="PTHR24340:SF73">
    <property type="entry name" value="HOMEOBOX PROTEIN BAGPIPE-RELATED"/>
    <property type="match status" value="1"/>
</dbReference>
<dbReference type="PANTHER" id="PTHR24340">
    <property type="entry name" value="HOMEOBOX PROTEIN NKX"/>
    <property type="match status" value="1"/>
</dbReference>
<dbReference type="Pfam" id="PF00046">
    <property type="entry name" value="Homeodomain"/>
    <property type="match status" value="1"/>
</dbReference>
<dbReference type="PRINTS" id="PR00024">
    <property type="entry name" value="HOMEOBOX"/>
</dbReference>
<dbReference type="SMART" id="SM00389">
    <property type="entry name" value="HOX"/>
    <property type="match status" value="1"/>
</dbReference>
<dbReference type="SUPFAM" id="SSF46689">
    <property type="entry name" value="Homeodomain-like"/>
    <property type="match status" value="1"/>
</dbReference>
<dbReference type="PROSITE" id="PS00027">
    <property type="entry name" value="HOMEOBOX_1"/>
    <property type="match status" value="1"/>
</dbReference>
<dbReference type="PROSITE" id="PS50071">
    <property type="entry name" value="HOMEOBOX_2"/>
    <property type="match status" value="1"/>
</dbReference>
<comment type="function">
    <text evidence="3">Involved in the determination of cell fates in the dorsal mesoderm.</text>
</comment>
<comment type="subcellular location">
    <subcellularLocation>
        <location evidence="4">Nucleus</location>
    </subcellularLocation>
</comment>
<comment type="tissue specificity">
    <text evidence="3">Is expressed in a segmented pattern in visceral muscle and in a subset of cardiac muscles. Loss of activity results in segmental gaps in midgut visceral muscle.</text>
</comment>
<comment type="similarity">
    <text evidence="4">Belongs to the NK-3 homeobox family.</text>
</comment>
<feature type="chain" id="PRO_0000049016" description="Homeobox protein bagpipe">
    <location>
        <begin position="1"/>
        <end position="382"/>
    </location>
</feature>
<feature type="DNA-binding region" description="Homeobox" evidence="1">
    <location>
        <begin position="175"/>
        <end position="234"/>
    </location>
</feature>
<feature type="region of interest" description="Disordered" evidence="2">
    <location>
        <begin position="27"/>
        <end position="66"/>
    </location>
</feature>
<feature type="region of interest" description="Disordered" evidence="2">
    <location>
        <begin position="144"/>
        <end position="178"/>
    </location>
</feature>
<feature type="region of interest" description="Disordered" evidence="2">
    <location>
        <begin position="314"/>
        <end position="382"/>
    </location>
</feature>
<feature type="compositionally biased region" description="Basic and acidic residues" evidence="2">
    <location>
        <begin position="48"/>
        <end position="62"/>
    </location>
</feature>
<feature type="compositionally biased region" description="Low complexity" evidence="2">
    <location>
        <begin position="158"/>
        <end position="170"/>
    </location>
</feature>
<feature type="compositionally biased region" description="Low complexity" evidence="2">
    <location>
        <begin position="321"/>
        <end position="335"/>
    </location>
</feature>
<feature type="compositionally biased region" description="Acidic residues" evidence="2">
    <location>
        <begin position="373"/>
        <end position="382"/>
    </location>
</feature>
<feature type="sequence variant" description="In strain: F-96S, F-274F, S-26F, S-94F, S-377F, S-510S, S-521F, S-521S, S-565F, S-968F and US-255F.">
    <original>I</original>
    <variation>A</variation>
    <location>
        <position position="62"/>
    </location>
</feature>
<feature type="sequence variant" description="In strain: F-775F, S-549S and S-1224F.">
    <original>I</original>
    <variation>V</variation>
    <location>
        <position position="62"/>
    </location>
</feature>
<feature type="sequence variant" description="In strain: F-775F, S-549S and S-1224F.">
    <original>G</original>
    <variation>S</variation>
    <location>
        <position position="74"/>
    </location>
</feature>
<feature type="sequence variant" description="In strain: S-26F, S-94F, S-438S, S-510S and S-521F.">
    <original>T</original>
    <variation>N</variation>
    <location>
        <position position="327"/>
    </location>
</feature>
<feature type="sequence variant" description="In strain: S-26F, S-94F, S-438S, S-510S and S-521F.">
    <original>G</original>
    <variation>S</variation>
    <location>
        <position position="342"/>
    </location>
</feature>
<feature type="sequence variant" description="In strain: S-521S, S-968F and US-255F.">
    <original>S</original>
    <variation>SGAES</variation>
    <location>
        <position position="367"/>
    </location>
</feature>
<feature type="sequence variant" description="In strain: F-611F.">
    <original>H</original>
    <variation>Q</variation>
    <location>
        <position position="369"/>
    </location>
</feature>
<feature type="sequence conflict" description="In Ref. 1; AAC37165." evidence="4" ref="1">
    <original>V</original>
    <variation>I</variation>
    <location>
        <position position="251"/>
    </location>
</feature>